<gene>
    <name type="primary">Stc2</name>
</gene>
<protein>
    <recommendedName>
        <fullName>Stanniocalcin-2</fullName>
        <shortName>STC-2</shortName>
    </recommendedName>
</protein>
<dbReference type="EMBL" id="AB030707">
    <property type="protein sequence ID" value="BAA85251.1"/>
    <property type="molecule type" value="mRNA"/>
</dbReference>
<dbReference type="RefSeq" id="NP_071566.1">
    <property type="nucleotide sequence ID" value="NM_022230.2"/>
</dbReference>
<dbReference type="SMR" id="Q9R0K8"/>
<dbReference type="FunCoup" id="Q9R0K8">
    <property type="interactions" value="258"/>
</dbReference>
<dbReference type="STRING" id="10116.ENSRNOP00000028146"/>
<dbReference type="GlyCosmos" id="Q9R0K8">
    <property type="glycosylation" value="1 site, No reported glycans"/>
</dbReference>
<dbReference type="GlyGen" id="Q9R0K8">
    <property type="glycosylation" value="1 site"/>
</dbReference>
<dbReference type="PhosphoSitePlus" id="Q9R0K8"/>
<dbReference type="PaxDb" id="10116-ENSRNOP00000028146"/>
<dbReference type="Ensembl" id="ENSRNOT00000028146.4">
    <property type="protein sequence ID" value="ENSRNOP00000028146.1"/>
    <property type="gene ID" value="ENSRNOG00000020729.4"/>
</dbReference>
<dbReference type="GeneID" id="63878"/>
<dbReference type="KEGG" id="rno:63878"/>
<dbReference type="UCSC" id="RGD:621777">
    <property type="organism name" value="rat"/>
</dbReference>
<dbReference type="AGR" id="RGD:621777"/>
<dbReference type="CTD" id="8614"/>
<dbReference type="RGD" id="621777">
    <property type="gene designation" value="Stc2"/>
</dbReference>
<dbReference type="eggNOG" id="ENOG502QU7E">
    <property type="taxonomic scope" value="Eukaryota"/>
</dbReference>
<dbReference type="GeneTree" id="ENSGT00390000005989"/>
<dbReference type="HOGENOM" id="CLU_064102_0_0_1"/>
<dbReference type="InParanoid" id="Q9R0K8"/>
<dbReference type="OMA" id="HNSKATH"/>
<dbReference type="OrthoDB" id="8931566at2759"/>
<dbReference type="PhylomeDB" id="Q9R0K8"/>
<dbReference type="TreeFam" id="TF324693"/>
<dbReference type="Reactome" id="R-RNO-381426">
    <property type="pathway name" value="Regulation of Insulin-like Growth Factor (IGF) transport and uptake by Insulin-like Growth Factor Binding Proteins (IGFBPs)"/>
</dbReference>
<dbReference type="Reactome" id="R-RNO-8957275">
    <property type="pathway name" value="Post-translational protein phosphorylation"/>
</dbReference>
<dbReference type="PRO" id="PR:Q9R0K8"/>
<dbReference type="Proteomes" id="UP000002494">
    <property type="component" value="Chromosome 10"/>
</dbReference>
<dbReference type="Bgee" id="ENSRNOG00000020729">
    <property type="expression patterns" value="Expressed in spleen and 17 other cell types or tissues"/>
</dbReference>
<dbReference type="GO" id="GO:0005783">
    <property type="term" value="C:endoplasmic reticulum"/>
    <property type="evidence" value="ECO:0000266"/>
    <property type="project" value="RGD"/>
</dbReference>
<dbReference type="GO" id="GO:0005615">
    <property type="term" value="C:extracellular space"/>
    <property type="evidence" value="ECO:0000318"/>
    <property type="project" value="GO_Central"/>
</dbReference>
<dbReference type="GO" id="GO:0005794">
    <property type="term" value="C:Golgi apparatus"/>
    <property type="evidence" value="ECO:0000266"/>
    <property type="project" value="RGD"/>
</dbReference>
<dbReference type="GO" id="GO:0048471">
    <property type="term" value="C:perinuclear region of cytoplasm"/>
    <property type="evidence" value="ECO:0000266"/>
    <property type="project" value="RGD"/>
</dbReference>
<dbReference type="GO" id="GO:0019899">
    <property type="term" value="F:enzyme binding"/>
    <property type="evidence" value="ECO:0000266"/>
    <property type="project" value="RGD"/>
</dbReference>
<dbReference type="GO" id="GO:0020037">
    <property type="term" value="F:heme binding"/>
    <property type="evidence" value="ECO:0000266"/>
    <property type="project" value="RGD"/>
</dbReference>
<dbReference type="GO" id="GO:0005179">
    <property type="term" value="F:hormone activity"/>
    <property type="evidence" value="ECO:0007669"/>
    <property type="project" value="UniProtKB-KW"/>
</dbReference>
<dbReference type="GO" id="GO:0042803">
    <property type="term" value="F:protein homodimerization activity"/>
    <property type="evidence" value="ECO:0000266"/>
    <property type="project" value="RGD"/>
</dbReference>
<dbReference type="GO" id="GO:0055074">
    <property type="term" value="P:calcium ion homeostasis"/>
    <property type="evidence" value="ECO:0000266"/>
    <property type="project" value="RGD"/>
</dbReference>
<dbReference type="GO" id="GO:0071456">
    <property type="term" value="P:cellular response to hypoxia"/>
    <property type="evidence" value="ECO:0000270"/>
    <property type="project" value="RGD"/>
</dbReference>
<dbReference type="GO" id="GO:0046697">
    <property type="term" value="P:decidualization"/>
    <property type="evidence" value="ECO:0000270"/>
    <property type="project" value="RGD"/>
</dbReference>
<dbReference type="GO" id="GO:0007566">
    <property type="term" value="P:embryo implantation"/>
    <property type="evidence" value="ECO:0000270"/>
    <property type="project" value="RGD"/>
</dbReference>
<dbReference type="GO" id="GO:0030968">
    <property type="term" value="P:endoplasmic reticulum unfolded protein response"/>
    <property type="evidence" value="ECO:0000266"/>
    <property type="project" value="RGD"/>
</dbReference>
<dbReference type="GO" id="GO:0006874">
    <property type="term" value="P:intracellular calcium ion homeostasis"/>
    <property type="evidence" value="ECO:0000315"/>
    <property type="project" value="MGI"/>
</dbReference>
<dbReference type="GO" id="GO:0010629">
    <property type="term" value="P:negative regulation of gene expression"/>
    <property type="evidence" value="ECO:0000266"/>
    <property type="project" value="RGD"/>
</dbReference>
<dbReference type="GO" id="GO:0040015">
    <property type="term" value="P:negative regulation of multicellular organism growth"/>
    <property type="evidence" value="ECO:0000266"/>
    <property type="project" value="RGD"/>
</dbReference>
<dbReference type="GO" id="GO:0046885">
    <property type="term" value="P:regulation of hormone biosynthetic process"/>
    <property type="evidence" value="ECO:0000266"/>
    <property type="project" value="RGD"/>
</dbReference>
<dbReference type="GO" id="GO:2001256">
    <property type="term" value="P:regulation of store-operated calcium entry"/>
    <property type="evidence" value="ECO:0000266"/>
    <property type="project" value="RGD"/>
</dbReference>
<dbReference type="GO" id="GO:0034976">
    <property type="term" value="P:response to endoplasmic reticulum stress"/>
    <property type="evidence" value="ECO:0000266"/>
    <property type="project" value="RGD"/>
</dbReference>
<dbReference type="GO" id="GO:0006979">
    <property type="term" value="P:response to oxidative stress"/>
    <property type="evidence" value="ECO:0000266"/>
    <property type="project" value="RGD"/>
</dbReference>
<dbReference type="GO" id="GO:0043434">
    <property type="term" value="P:response to peptide hormone"/>
    <property type="evidence" value="ECO:0000270"/>
    <property type="project" value="RGD"/>
</dbReference>
<dbReference type="GO" id="GO:0033280">
    <property type="term" value="P:response to vitamin D"/>
    <property type="evidence" value="ECO:0000270"/>
    <property type="project" value="RGD"/>
</dbReference>
<dbReference type="InterPro" id="IPR004978">
    <property type="entry name" value="Stanniocalcin"/>
</dbReference>
<dbReference type="PANTHER" id="PTHR11245">
    <property type="entry name" value="STANNIOCALCIN"/>
    <property type="match status" value="1"/>
</dbReference>
<dbReference type="PANTHER" id="PTHR11245:SF2">
    <property type="entry name" value="STANNIOCALCIN-2"/>
    <property type="match status" value="1"/>
</dbReference>
<dbReference type="Pfam" id="PF03298">
    <property type="entry name" value="Stanniocalcin"/>
    <property type="match status" value="1"/>
</dbReference>
<feature type="signal peptide" evidence="2">
    <location>
        <begin position="1"/>
        <end position="24"/>
    </location>
</feature>
<feature type="chain" id="PRO_0000033307" description="Stanniocalcin-2">
    <location>
        <begin position="25"/>
        <end position="296"/>
    </location>
</feature>
<feature type="region of interest" description="Disordered" evidence="3">
    <location>
        <begin position="22"/>
        <end position="44"/>
    </location>
</feature>
<feature type="region of interest" description="Disordered" evidence="3">
    <location>
        <begin position="236"/>
        <end position="296"/>
    </location>
</feature>
<feature type="compositionally biased region" description="Basic and acidic residues" evidence="3">
    <location>
        <begin position="238"/>
        <end position="258"/>
    </location>
</feature>
<feature type="glycosylation site" description="N-linked (GlcNAc...) asparagine" evidence="2">
    <location>
        <position position="73"/>
    </location>
</feature>
<organism>
    <name type="scientific">Rattus norvegicus</name>
    <name type="common">Rat</name>
    <dbReference type="NCBI Taxonomy" id="10116"/>
    <lineage>
        <taxon>Eukaryota</taxon>
        <taxon>Metazoa</taxon>
        <taxon>Chordata</taxon>
        <taxon>Craniata</taxon>
        <taxon>Vertebrata</taxon>
        <taxon>Euteleostomi</taxon>
        <taxon>Mammalia</taxon>
        <taxon>Eutheria</taxon>
        <taxon>Euarchontoglires</taxon>
        <taxon>Glires</taxon>
        <taxon>Rodentia</taxon>
        <taxon>Myomorpha</taxon>
        <taxon>Muroidea</taxon>
        <taxon>Muridae</taxon>
        <taxon>Murinae</taxon>
        <taxon>Rattus</taxon>
    </lineage>
</organism>
<evidence type="ECO:0000250" key="1"/>
<evidence type="ECO:0000255" key="2"/>
<evidence type="ECO:0000256" key="3">
    <source>
        <dbReference type="SAM" id="MobiDB-lite"/>
    </source>
</evidence>
<evidence type="ECO:0000305" key="4"/>
<keyword id="KW-1015">Disulfide bond</keyword>
<keyword id="KW-0325">Glycoprotein</keyword>
<keyword id="KW-0372">Hormone</keyword>
<keyword id="KW-1185">Reference proteome</keyword>
<keyword id="KW-0964">Secreted</keyword>
<keyword id="KW-0732">Signal</keyword>
<name>STC2_RAT</name>
<sequence length="296" mass="32622">MCAERLGQFVTLALVFATLDPARGTDSTNPPEGPQDRGSQQKGRLSLQNTAEIQHCLVNAGDVGCGVFECFENNSCEIQGLHGICMTFLHNAGKFDAQGKSFIKDALRCKAHALRHKFGCISRKCPAIREMVYQLQRECYLKHDLCSAAQENVVVIVEMIHFKDLLLHEPYVDLVNLLLTCGEDVREAVTRSVQAQCEQSWGGLCSILSFCTSNIQRPPTAAPEHQPLADRAQLSRPYHRDTDHHLTANRGAKGERGSKSHLHAHARGGAGGQSAQGPSGSSEWEDEQSEYSDIRR</sequence>
<reference key="1">
    <citation type="journal article" date="1999" name="FEBS Lett.">
        <title>Regulation by 1alpha,25-dihydroxyvitamin D(3) of expression of stanniocalcin messages in the rat kidney and ovary.</title>
        <authorList>
            <person name="Honda S."/>
            <person name="Kashiwagi M."/>
            <person name="Ookata K."/>
            <person name="Tojo A."/>
            <person name="Hirose S."/>
        </authorList>
    </citation>
    <scope>NUCLEOTIDE SEQUENCE [MRNA]</scope>
    <source>
        <strain>Sprague-Dawley</strain>
    </source>
</reference>
<accession>Q9R0K8</accession>
<comment type="function">
    <text>Has an anti-hypocalcemic action on calcium and phosphate homeostasis.</text>
</comment>
<comment type="subunit">
    <text evidence="1">Homodimer; disulfide-linked.</text>
</comment>
<comment type="subcellular location">
    <subcellularLocation>
        <location evidence="4">Secreted</location>
    </subcellularLocation>
</comment>
<comment type="tissue specificity">
    <text>Expressed in a variety of tissues. Strongly expressed in ovary and to a lesser extent in kidney.</text>
</comment>
<comment type="similarity">
    <text evidence="4">Belongs to the stanniocalcin family.</text>
</comment>
<proteinExistence type="evidence at transcript level"/>